<name>ATPE_MICLC</name>
<accession>P80286</accession>
<accession>C5CA79</accession>
<sequence>MAELNVEIVSEERSIWSGAASAVSARTVNGEIGILPGHTPMLAVLGDGEVVVRTTDGGTVTAQAHGGFFSVDHDRVVIAATSARLGDAAAA</sequence>
<evidence type="ECO:0000250" key="1"/>
<evidence type="ECO:0000269" key="2">
    <source>
    </source>
</evidence>
<evidence type="ECO:0000305" key="3"/>
<gene>
    <name type="primary">atpC</name>
    <name type="ordered locus">Mlut_08190</name>
</gene>
<organism>
    <name type="scientific">Micrococcus luteus (strain ATCC 4698 / DSM 20030 / JCM 1464 / CCM 169 / CCUG 5858 / IAM 1056 / NBRC 3333 / NCIMB 9278 / NCTC 2665 / VKM Ac-2230)</name>
    <name type="common">Micrococcus lysodeikticus</name>
    <dbReference type="NCBI Taxonomy" id="465515"/>
    <lineage>
        <taxon>Bacteria</taxon>
        <taxon>Bacillati</taxon>
        <taxon>Actinomycetota</taxon>
        <taxon>Actinomycetes</taxon>
        <taxon>Micrococcales</taxon>
        <taxon>Micrococcaceae</taxon>
        <taxon>Micrococcus</taxon>
    </lineage>
</organism>
<comment type="function">
    <text evidence="1">Produces ATP from ADP in the presence of a proton gradient across the membrane.</text>
</comment>
<comment type="subunit">
    <text>F-type ATPases have 2 components, CF(1) - the catalytic core - and CF(0) - the membrane proton channel. CF(1) has five subunits: alpha(3), beta(3), gamma(1), delta(1), epsilon(1). CF(0) has three main subunits: a, b and c.</text>
</comment>
<comment type="subcellular location">
    <subcellularLocation>
        <location evidence="1">Cell membrane</location>
        <topology evidence="1">Peripheral membrane protein</topology>
    </subcellularLocation>
</comment>
<comment type="similarity">
    <text evidence="3">Belongs to the ATPase epsilon chain family.</text>
</comment>
<keyword id="KW-0066">ATP synthesis</keyword>
<keyword id="KW-1003">Cell membrane</keyword>
<keyword id="KW-0139">CF(1)</keyword>
<keyword id="KW-0903">Direct protein sequencing</keyword>
<keyword id="KW-0375">Hydrogen ion transport</keyword>
<keyword id="KW-0406">Ion transport</keyword>
<keyword id="KW-0472">Membrane</keyword>
<keyword id="KW-1185">Reference proteome</keyword>
<keyword id="KW-0813">Transport</keyword>
<feature type="initiator methionine" description="Removed" evidence="2">
    <location>
        <position position="1"/>
    </location>
</feature>
<feature type="chain" id="PRO_0000188156" description="ATP synthase epsilon chain">
    <location>
        <begin position="2"/>
        <end position="91"/>
    </location>
</feature>
<feature type="sequence conflict" description="In Ref. 2; AA sequence." evidence="3" ref="2">
    <original>R</original>
    <variation>Y</variation>
    <location>
        <position position="13"/>
    </location>
</feature>
<feature type="sequence conflict" description="In Ref. 2; AA sequence." evidence="3" ref="2">
    <original>W</original>
    <variation>I</variation>
    <location>
        <position position="16"/>
    </location>
</feature>
<feature type="sequence conflict" description="In Ref. 2; AA sequence." evidence="3" ref="2">
    <original>S</original>
    <variation>A</variation>
    <location>
        <position position="21"/>
    </location>
</feature>
<feature type="sequence conflict" description="In Ref. 2; AA sequence." evidence="3" ref="2">
    <original>SA</original>
    <variation>TV</variation>
    <location>
        <begin position="24"/>
        <end position="25"/>
    </location>
</feature>
<dbReference type="EMBL" id="CP001628">
    <property type="protein sequence ID" value="ACS30348.1"/>
    <property type="molecule type" value="Genomic_DNA"/>
</dbReference>
<dbReference type="RefSeq" id="WP_002857254.1">
    <property type="nucleotide sequence ID" value="NC_012803.1"/>
</dbReference>
<dbReference type="SMR" id="P80286"/>
<dbReference type="STRING" id="465515.Mlut_08190"/>
<dbReference type="EnsemblBacteria" id="ACS30348">
    <property type="protein sequence ID" value="ACS30348"/>
    <property type="gene ID" value="Mlut_08190"/>
</dbReference>
<dbReference type="GeneID" id="93344981"/>
<dbReference type="KEGG" id="mlu:Mlut_08190"/>
<dbReference type="eggNOG" id="COG0355">
    <property type="taxonomic scope" value="Bacteria"/>
</dbReference>
<dbReference type="HOGENOM" id="CLU_084338_4_0_11"/>
<dbReference type="Proteomes" id="UP000000738">
    <property type="component" value="Chromosome"/>
</dbReference>
<dbReference type="GO" id="GO:0005886">
    <property type="term" value="C:plasma membrane"/>
    <property type="evidence" value="ECO:0007669"/>
    <property type="project" value="UniProtKB-SubCell"/>
</dbReference>
<dbReference type="GO" id="GO:0045259">
    <property type="term" value="C:proton-transporting ATP synthase complex"/>
    <property type="evidence" value="ECO:0007669"/>
    <property type="project" value="UniProtKB-KW"/>
</dbReference>
<dbReference type="GO" id="GO:0005524">
    <property type="term" value="F:ATP binding"/>
    <property type="evidence" value="ECO:0007669"/>
    <property type="project" value="UniProtKB-UniRule"/>
</dbReference>
<dbReference type="GO" id="GO:0046933">
    <property type="term" value="F:proton-transporting ATP synthase activity, rotational mechanism"/>
    <property type="evidence" value="ECO:0007669"/>
    <property type="project" value="UniProtKB-UniRule"/>
</dbReference>
<dbReference type="CDD" id="cd12152">
    <property type="entry name" value="F1-ATPase_delta"/>
    <property type="match status" value="1"/>
</dbReference>
<dbReference type="Gene3D" id="2.60.15.10">
    <property type="entry name" value="F0F1 ATP synthase delta/epsilon subunit, N-terminal"/>
    <property type="match status" value="1"/>
</dbReference>
<dbReference type="InterPro" id="IPR001469">
    <property type="entry name" value="ATP_synth_F1_dsu/esu"/>
</dbReference>
<dbReference type="InterPro" id="IPR020546">
    <property type="entry name" value="ATP_synth_F1_dsu/esu_N"/>
</dbReference>
<dbReference type="InterPro" id="IPR036771">
    <property type="entry name" value="ATPsynth_dsu/esu_N"/>
</dbReference>
<dbReference type="NCBIfam" id="NF009977">
    <property type="entry name" value="PRK13442.1"/>
    <property type="match status" value="1"/>
</dbReference>
<dbReference type="PANTHER" id="PTHR13822">
    <property type="entry name" value="ATP SYNTHASE DELTA/EPSILON CHAIN"/>
    <property type="match status" value="1"/>
</dbReference>
<dbReference type="PANTHER" id="PTHR13822:SF10">
    <property type="entry name" value="ATP SYNTHASE EPSILON CHAIN, CHLOROPLASTIC"/>
    <property type="match status" value="1"/>
</dbReference>
<dbReference type="Pfam" id="PF02823">
    <property type="entry name" value="ATP-synt_DE_N"/>
    <property type="match status" value="1"/>
</dbReference>
<dbReference type="SUPFAM" id="SSF51344">
    <property type="entry name" value="Epsilon subunit of F1F0-ATP synthase N-terminal domain"/>
    <property type="match status" value="1"/>
</dbReference>
<protein>
    <recommendedName>
        <fullName>ATP synthase epsilon chain</fullName>
    </recommendedName>
    <alternativeName>
        <fullName>ATP synthase F1 sector epsilon subunit</fullName>
    </alternativeName>
    <alternativeName>
        <fullName>F-ATPase epsilon subunit</fullName>
    </alternativeName>
</protein>
<proteinExistence type="evidence at protein level"/>
<reference key="1">
    <citation type="journal article" date="2010" name="J. Bacteriol.">
        <title>Genome sequence of the Fleming strain of Micrococcus luteus, a simple free-living actinobacterium.</title>
        <authorList>
            <person name="Young M."/>
            <person name="Artsatbanov V."/>
            <person name="Beller H.R."/>
            <person name="Chandra G."/>
            <person name="Chater K.F."/>
            <person name="Dover L.G."/>
            <person name="Goh E.B."/>
            <person name="Kahan T."/>
            <person name="Kaprelyants A.S."/>
            <person name="Kyrpides N."/>
            <person name="Lapidus A."/>
            <person name="Lowry S.R."/>
            <person name="Lykidis A."/>
            <person name="Mahillon J."/>
            <person name="Markowitz V."/>
            <person name="Mavromatis K."/>
            <person name="Mukamolova G.V."/>
            <person name="Oren A."/>
            <person name="Rokem J.S."/>
            <person name="Smith M.C."/>
            <person name="Young D.I."/>
            <person name="Greenblatt C.L."/>
        </authorList>
    </citation>
    <scope>NUCLEOTIDE SEQUENCE [LARGE SCALE GENOMIC DNA]</scope>
    <source>
        <strain>ATCC 4698 / DSM 20030 / JCM 1464 / CCM 169 / CCUG 5858 / IAM 1056 / NBRC 3333 / NCIMB 9278 / NCTC 2665 / VKM Ac-2230</strain>
    </source>
</reference>
<reference key="2">
    <citation type="journal article" date="1994" name="Biochim. Biophys. Acta">
        <title>ATP synthesis and hydrolysis of the ATP-synthase from Micrococcus luteus regulated by an inhibitor subunit and membrane energization.</title>
        <authorList>
            <person name="Grueber G."/>
            <person name="Godovac-Zimmermann J."/>
            <person name="Nawroth T."/>
        </authorList>
    </citation>
    <scope>PROTEIN SEQUENCE OF 2-25</scope>
</reference>